<gene>
    <name evidence="31" type="primary">BMAL1</name>
    <name type="synonym">ARNTL</name>
    <name type="synonym">BHLHE5</name>
    <name evidence="28" type="synonym">MOP3</name>
    <name type="synonym">PASD3</name>
</gene>
<evidence type="ECO:0000250" key="1">
    <source>
        <dbReference type="UniProtKB" id="Q9WTL8"/>
    </source>
</evidence>
<evidence type="ECO:0000255" key="2">
    <source>
        <dbReference type="PROSITE-ProRule" id="PRU00140"/>
    </source>
</evidence>
<evidence type="ECO:0000255" key="3">
    <source>
        <dbReference type="PROSITE-ProRule" id="PRU00981"/>
    </source>
</evidence>
<evidence type="ECO:0000256" key="4">
    <source>
        <dbReference type="SAM" id="MobiDB-lite"/>
    </source>
</evidence>
<evidence type="ECO:0000269" key="5">
    <source>
    </source>
</evidence>
<evidence type="ECO:0000269" key="6">
    <source>
    </source>
</evidence>
<evidence type="ECO:0000269" key="7">
    <source>
    </source>
</evidence>
<evidence type="ECO:0000269" key="8">
    <source>
    </source>
</evidence>
<evidence type="ECO:0000269" key="9">
    <source>
    </source>
</evidence>
<evidence type="ECO:0000269" key="10">
    <source>
    </source>
</evidence>
<evidence type="ECO:0000269" key="11">
    <source>
    </source>
</evidence>
<evidence type="ECO:0000269" key="12">
    <source>
    </source>
</evidence>
<evidence type="ECO:0000269" key="13">
    <source>
    </source>
</evidence>
<evidence type="ECO:0000269" key="14">
    <source>
    </source>
</evidence>
<evidence type="ECO:0000269" key="15">
    <source>
    </source>
</evidence>
<evidence type="ECO:0000269" key="16">
    <source>
    </source>
</evidence>
<evidence type="ECO:0000269" key="17">
    <source>
    </source>
</evidence>
<evidence type="ECO:0000269" key="18">
    <source>
    </source>
</evidence>
<evidence type="ECO:0000269" key="19">
    <source>
    </source>
</evidence>
<evidence type="ECO:0000269" key="20">
    <source>
    </source>
</evidence>
<evidence type="ECO:0000269" key="21">
    <source>
    </source>
</evidence>
<evidence type="ECO:0000269" key="22">
    <source>
    </source>
</evidence>
<evidence type="ECO:0000269" key="23">
    <source>
    </source>
</evidence>
<evidence type="ECO:0000269" key="24">
    <source>
    </source>
</evidence>
<evidence type="ECO:0000303" key="25">
    <source>
    </source>
</evidence>
<evidence type="ECO:0000303" key="26">
    <source>
    </source>
</evidence>
<evidence type="ECO:0000303" key="27">
    <source>
    </source>
</evidence>
<evidence type="ECO:0000303" key="28">
    <source>
    </source>
</evidence>
<evidence type="ECO:0000305" key="29"/>
<evidence type="ECO:0000305" key="30">
    <source>
    </source>
</evidence>
<evidence type="ECO:0000312" key="31">
    <source>
        <dbReference type="HGNC" id="HGNC:701"/>
    </source>
</evidence>
<evidence type="ECO:0007744" key="32">
    <source>
    </source>
</evidence>
<evidence type="ECO:0007829" key="33">
    <source>
        <dbReference type="PDB" id="4H10"/>
    </source>
</evidence>
<name>BMAL1_HUMAN</name>
<keyword id="KW-0002">3D-structure</keyword>
<keyword id="KW-0007">Acetylation</keyword>
<keyword id="KW-0010">Activator</keyword>
<keyword id="KW-0025">Alternative splicing</keyword>
<keyword id="KW-0090">Biological rhythms</keyword>
<keyword id="KW-0963">Cytoplasm</keyword>
<keyword id="KW-0238">DNA-binding</keyword>
<keyword id="KW-1017">Isopeptide bond</keyword>
<keyword id="KW-0539">Nucleus</keyword>
<keyword id="KW-0597">Phosphoprotein</keyword>
<keyword id="KW-1267">Proteomics identification</keyword>
<keyword id="KW-1185">Reference proteome</keyword>
<keyword id="KW-0677">Repeat</keyword>
<keyword id="KW-0804">Transcription</keyword>
<keyword id="KW-0805">Transcription regulation</keyword>
<keyword id="KW-0832">Ubl conjugation</keyword>
<dbReference type="EMBL" id="D89722">
    <property type="protein sequence ID" value="BAA19968.1"/>
    <property type="molecule type" value="mRNA"/>
</dbReference>
<dbReference type="EMBL" id="AB000812">
    <property type="protein sequence ID" value="BAA19935.1"/>
    <property type="molecule type" value="mRNA"/>
</dbReference>
<dbReference type="EMBL" id="AB000813">
    <property type="protein sequence ID" value="BAA19936.1"/>
    <property type="molecule type" value="Genomic_DNA"/>
</dbReference>
<dbReference type="EMBL" id="AB000814">
    <property type="protein sequence ID" value="BAA19937.1"/>
    <property type="molecule type" value="mRNA"/>
</dbReference>
<dbReference type="EMBL" id="AB000815">
    <property type="protein sequence ID" value="BAA19938.1"/>
    <property type="molecule type" value="mRNA"/>
</dbReference>
<dbReference type="EMBL" id="AB000816">
    <property type="protein sequence ID" value="BAA19939.1"/>
    <property type="molecule type" value="mRNA"/>
</dbReference>
<dbReference type="EMBL" id="U51627">
    <property type="protein sequence ID" value="AAC51213.1"/>
    <property type="molecule type" value="mRNA"/>
</dbReference>
<dbReference type="EMBL" id="U60415">
    <property type="protein sequence ID" value="AAB37248.1"/>
    <property type="molecule type" value="mRNA"/>
</dbReference>
<dbReference type="EMBL" id="AF044288">
    <property type="protein sequence ID" value="AAC24353.1"/>
    <property type="molecule type" value="mRNA"/>
</dbReference>
<dbReference type="EMBL" id="AK095749">
    <property type="protein sequence ID" value="BAG53120.1"/>
    <property type="molecule type" value="mRNA"/>
</dbReference>
<dbReference type="EMBL" id="AK291510">
    <property type="protein sequence ID" value="BAF84199.1"/>
    <property type="molecule type" value="mRNA"/>
</dbReference>
<dbReference type="EMBL" id="EF015894">
    <property type="protein sequence ID" value="ABM64205.1"/>
    <property type="molecule type" value="Genomic_DNA"/>
</dbReference>
<dbReference type="EMBL" id="AC016884">
    <property type="status" value="NOT_ANNOTATED_CDS"/>
    <property type="molecule type" value="Genomic_DNA"/>
</dbReference>
<dbReference type="EMBL" id="AC022878">
    <property type="status" value="NOT_ANNOTATED_CDS"/>
    <property type="molecule type" value="Genomic_DNA"/>
</dbReference>
<dbReference type="EMBL" id="CH471064">
    <property type="protein sequence ID" value="EAW68504.1"/>
    <property type="molecule type" value="Genomic_DNA"/>
</dbReference>
<dbReference type="EMBL" id="CH471064">
    <property type="protein sequence ID" value="EAW68505.1"/>
    <property type="molecule type" value="Genomic_DNA"/>
</dbReference>
<dbReference type="EMBL" id="CH471064">
    <property type="protein sequence ID" value="EAW68510.1"/>
    <property type="molecule type" value="Genomic_DNA"/>
</dbReference>
<dbReference type="EMBL" id="CH471064">
    <property type="protein sequence ID" value="EAW68511.1"/>
    <property type="molecule type" value="Genomic_DNA"/>
</dbReference>
<dbReference type="EMBL" id="CH471064">
    <property type="protein sequence ID" value="EAW68513.1"/>
    <property type="molecule type" value="Genomic_DNA"/>
</dbReference>
<dbReference type="EMBL" id="BC016674">
    <property type="protein sequence ID" value="AAH16674.1"/>
    <property type="molecule type" value="mRNA"/>
</dbReference>
<dbReference type="EMBL" id="BC031214">
    <property type="protein sequence ID" value="AAH31214.1"/>
    <property type="molecule type" value="mRNA"/>
</dbReference>
<dbReference type="EMBL" id="BC041129">
    <property type="protein sequence ID" value="AAH41129.2"/>
    <property type="molecule type" value="mRNA"/>
</dbReference>
<dbReference type="CCDS" id="CCDS44543.1">
    <molecule id="O00327-9"/>
</dbReference>
<dbReference type="CCDS" id="CCDS73259.1">
    <molecule id="O00327-2"/>
</dbReference>
<dbReference type="PIR" id="JC5405">
    <property type="entry name" value="JC5405"/>
</dbReference>
<dbReference type="PIR" id="JC5407">
    <property type="entry name" value="JC5407"/>
</dbReference>
<dbReference type="PIR" id="PC4288">
    <property type="entry name" value="PC4288"/>
</dbReference>
<dbReference type="PIR" id="PC4289">
    <property type="entry name" value="PC4289"/>
</dbReference>
<dbReference type="RefSeq" id="NP_001025443.1">
    <molecule id="O00327-8"/>
    <property type="nucleotide sequence ID" value="NM_001030272.3"/>
</dbReference>
<dbReference type="RefSeq" id="NP_001025444.1">
    <molecule id="O00327-9"/>
    <property type="nucleotide sequence ID" value="NM_001030273.3"/>
</dbReference>
<dbReference type="RefSeq" id="NP_001169.3">
    <molecule id="O00327-8"/>
    <property type="nucleotide sequence ID" value="NM_001178.5"/>
</dbReference>
<dbReference type="RefSeq" id="NP_001284648.1">
    <molecule id="O00327-2"/>
    <property type="nucleotide sequence ID" value="NM_001297719.2"/>
</dbReference>
<dbReference type="RefSeq" id="NP_001284651.1">
    <molecule id="O00327-2"/>
    <property type="nucleotide sequence ID" value="NM_001297722.2"/>
</dbReference>
<dbReference type="RefSeq" id="NP_001284653.1">
    <molecule id="O00327-1"/>
    <property type="nucleotide sequence ID" value="NM_001297724.2"/>
</dbReference>
<dbReference type="RefSeq" id="NP_001338733.1">
    <molecule id="O00327-8"/>
    <property type="nucleotide sequence ID" value="NM_001351804.1"/>
</dbReference>
<dbReference type="RefSeq" id="NP_001338737.1">
    <molecule id="O00327-1"/>
    <property type="nucleotide sequence ID" value="NM_001351808.2"/>
</dbReference>
<dbReference type="RefSeq" id="NP_001338739.1">
    <molecule id="O00327-4"/>
    <property type="nucleotide sequence ID" value="NM_001351810.2"/>
</dbReference>
<dbReference type="RefSeq" id="NP_001338744.1">
    <molecule id="O00327-8"/>
    <property type="nucleotide sequence ID" value="NM_001351815.2"/>
</dbReference>
<dbReference type="RefSeq" id="NP_001338745.1">
    <molecule id="O00327-1"/>
    <property type="nucleotide sequence ID" value="NM_001351816.2"/>
</dbReference>
<dbReference type="RefSeq" id="NP_001338746.1">
    <molecule id="O00327-4"/>
    <property type="nucleotide sequence ID" value="NM_001351817.2"/>
</dbReference>
<dbReference type="RefSeq" id="NP_001338747.1">
    <molecule id="O00327-9"/>
    <property type="nucleotide sequence ID" value="NM_001351818.2"/>
</dbReference>
<dbReference type="RefSeq" id="NP_001338749.1">
    <molecule id="O00327-1"/>
    <property type="nucleotide sequence ID" value="NM_001351820.2"/>
</dbReference>
<dbReference type="RefSeq" id="NP_001338750.1">
    <molecule id="O00327-1"/>
    <property type="nucleotide sequence ID" value="NM_001351821.2"/>
</dbReference>
<dbReference type="RefSeq" id="NP_001338751.1">
    <molecule id="O00327-1"/>
    <property type="nucleotide sequence ID" value="NM_001351822.2"/>
</dbReference>
<dbReference type="RefSeq" id="NP_001338753.1">
    <molecule id="O00327-2"/>
    <property type="nucleotide sequence ID" value="NM_001351824.2"/>
</dbReference>
<dbReference type="RefSeq" id="XP_011518414.1">
    <property type="nucleotide sequence ID" value="XM_011520112.2"/>
</dbReference>
<dbReference type="RefSeq" id="XP_011518415.1">
    <property type="nucleotide sequence ID" value="XM_011520113.1"/>
</dbReference>
<dbReference type="RefSeq" id="XP_016873231.1">
    <property type="nucleotide sequence ID" value="XM_017017742.1"/>
</dbReference>
<dbReference type="RefSeq" id="XP_016873232.1">
    <property type="nucleotide sequence ID" value="XM_017017743.1"/>
</dbReference>
<dbReference type="RefSeq" id="XP_016873235.1">
    <property type="nucleotide sequence ID" value="XM_017017746.1"/>
</dbReference>
<dbReference type="RefSeq" id="XP_016873236.1">
    <property type="nucleotide sequence ID" value="XM_017017747.1"/>
</dbReference>
<dbReference type="RefSeq" id="XP_016873237.1">
    <property type="nucleotide sequence ID" value="XM_017017748.1"/>
</dbReference>
<dbReference type="PDB" id="4H10">
    <property type="method" value="X-ray"/>
    <property type="resolution" value="2.40 A"/>
    <property type="chains" value="A=66-128"/>
</dbReference>
<dbReference type="PDB" id="8RW6">
    <property type="method" value="X-ray"/>
    <property type="resolution" value="1.83 A"/>
    <property type="chains" value="B=337-449"/>
</dbReference>
<dbReference type="PDB" id="8RW8">
    <property type="method" value="X-ray"/>
    <property type="resolution" value="2.16 A"/>
    <property type="chains" value="B=337-449"/>
</dbReference>
<dbReference type="PDBsum" id="4H10"/>
<dbReference type="PDBsum" id="8RW6"/>
<dbReference type="PDBsum" id="8RW8"/>
<dbReference type="SMR" id="O00327"/>
<dbReference type="BioGRID" id="106899">
    <property type="interactions" value="102"/>
</dbReference>
<dbReference type="ComplexPortal" id="CPX-3229">
    <property type="entry name" value="CLOCK-BMAL1 transcription complex"/>
</dbReference>
<dbReference type="CORUM" id="O00327"/>
<dbReference type="DIP" id="DIP-46008N"/>
<dbReference type="FunCoup" id="O00327">
    <property type="interactions" value="1655"/>
</dbReference>
<dbReference type="IntAct" id="O00327">
    <property type="interactions" value="25"/>
</dbReference>
<dbReference type="MINT" id="O00327"/>
<dbReference type="STRING" id="9606.ENSP00000384517"/>
<dbReference type="GlyCosmos" id="O00327">
    <property type="glycosylation" value="1 site, 1 glycan"/>
</dbReference>
<dbReference type="GlyGen" id="O00327">
    <property type="glycosylation" value="1 site, 1 O-linked glycan (1 site)"/>
</dbReference>
<dbReference type="iPTMnet" id="O00327"/>
<dbReference type="PhosphoSitePlus" id="O00327"/>
<dbReference type="BioMuta" id="ARNTL"/>
<dbReference type="jPOST" id="O00327"/>
<dbReference type="MassIVE" id="O00327"/>
<dbReference type="PaxDb" id="9606-ENSP00000384517"/>
<dbReference type="PeptideAtlas" id="O00327"/>
<dbReference type="ProteomicsDB" id="47841">
    <molecule id="O00327-2"/>
</dbReference>
<dbReference type="ProteomicsDB" id="47842">
    <molecule id="O00327-1"/>
</dbReference>
<dbReference type="ProteomicsDB" id="47843">
    <molecule id="O00327-3"/>
</dbReference>
<dbReference type="ProteomicsDB" id="47844">
    <molecule id="O00327-4"/>
</dbReference>
<dbReference type="ProteomicsDB" id="47845">
    <molecule id="O00327-5"/>
</dbReference>
<dbReference type="ProteomicsDB" id="47846">
    <molecule id="O00327-6"/>
</dbReference>
<dbReference type="ProteomicsDB" id="47847">
    <molecule id="O00327-7"/>
</dbReference>
<dbReference type="ProteomicsDB" id="47848">
    <molecule id="O00327-8"/>
</dbReference>
<dbReference type="ProteomicsDB" id="47849">
    <molecule id="O00327-9"/>
</dbReference>
<dbReference type="Antibodypedia" id="11861">
    <property type="antibodies" value="569 antibodies from 45 providers"/>
</dbReference>
<dbReference type="DNASU" id="406"/>
<dbReference type="Ensembl" id="ENST00000389707.8">
    <molecule id="O00327-8"/>
    <property type="protein sequence ID" value="ENSP00000374357.4"/>
    <property type="gene ID" value="ENSG00000133794.20"/>
</dbReference>
<dbReference type="Ensembl" id="ENST00000401424.6">
    <molecule id="O00327-9"/>
    <property type="protein sequence ID" value="ENSP00000385915.2"/>
    <property type="gene ID" value="ENSG00000133794.20"/>
</dbReference>
<dbReference type="Ensembl" id="ENST00000403290.6">
    <molecule id="O00327-2"/>
    <property type="protein sequence ID" value="ENSP00000384517.1"/>
    <property type="gene ID" value="ENSG00000133794.20"/>
</dbReference>
<dbReference type="Ensembl" id="ENST00000403482.7">
    <molecule id="O00327-7"/>
    <property type="protein sequence ID" value="ENSP00000385897.3"/>
    <property type="gene ID" value="ENSG00000133794.20"/>
</dbReference>
<dbReference type="Ensembl" id="ENST00000403510.8">
    <molecule id="O00327-2"/>
    <property type="protein sequence ID" value="ENSP00000385581.4"/>
    <property type="gene ID" value="ENSG00000133794.20"/>
</dbReference>
<dbReference type="Ensembl" id="ENST00000529388.6">
    <molecule id="O00327-2"/>
    <property type="protein sequence ID" value="ENSP00000433571.2"/>
    <property type="gene ID" value="ENSG00000133794.20"/>
</dbReference>
<dbReference type="GeneID" id="406"/>
<dbReference type="KEGG" id="hsa:406"/>
<dbReference type="MANE-Select" id="ENST00000403290.6">
    <property type="protein sequence ID" value="ENSP00000384517.1"/>
    <property type="RefSeq nucleotide sequence ID" value="NM_001297719.2"/>
    <property type="RefSeq protein sequence ID" value="NP_001284648.1"/>
</dbReference>
<dbReference type="UCSC" id="uc001mko.4">
    <molecule id="O00327-2"/>
    <property type="organism name" value="human"/>
</dbReference>
<dbReference type="AGR" id="HGNC:701"/>
<dbReference type="CTD" id="406"/>
<dbReference type="DisGeNET" id="406"/>
<dbReference type="GeneCards" id="BMAL1"/>
<dbReference type="HGNC" id="HGNC:701">
    <property type="gene designation" value="BMAL1"/>
</dbReference>
<dbReference type="HPA" id="ENSG00000133794">
    <property type="expression patterns" value="Low tissue specificity"/>
</dbReference>
<dbReference type="MIM" id="602550">
    <property type="type" value="gene"/>
</dbReference>
<dbReference type="neXtProt" id="NX_O00327"/>
<dbReference type="OpenTargets" id="ENSG00000133794"/>
<dbReference type="PharmGKB" id="PA24996"/>
<dbReference type="VEuPathDB" id="HostDB:ENSG00000133794"/>
<dbReference type="eggNOG" id="KOG3561">
    <property type="taxonomic scope" value="Eukaryota"/>
</dbReference>
<dbReference type="GeneTree" id="ENSGT00940000157523"/>
<dbReference type="HOGENOM" id="CLU_011864_2_2_1"/>
<dbReference type="InParanoid" id="O00327"/>
<dbReference type="OMA" id="PPTMVPD"/>
<dbReference type="OrthoDB" id="71302at2759"/>
<dbReference type="PAN-GO" id="O00327">
    <property type="GO annotations" value="6 GO annotations based on evolutionary models"/>
</dbReference>
<dbReference type="PhylomeDB" id="O00327"/>
<dbReference type="TreeFam" id="TF319983"/>
<dbReference type="PathwayCommons" id="O00327"/>
<dbReference type="Reactome" id="R-HSA-1368108">
    <property type="pathway name" value="BMAL1:CLOCK,NPAS2 activates circadian gene expression"/>
</dbReference>
<dbReference type="Reactome" id="R-HSA-1989781">
    <property type="pathway name" value="PPARA activates gene expression"/>
</dbReference>
<dbReference type="Reactome" id="R-HSA-400253">
    <property type="pathway name" value="Circadian Clock"/>
</dbReference>
<dbReference type="Reactome" id="R-HSA-9707616">
    <property type="pathway name" value="Heme signaling"/>
</dbReference>
<dbReference type="Reactome" id="R-HSA-9768919">
    <property type="pathway name" value="NPAS4 regulates expression of target genes"/>
</dbReference>
<dbReference type="SignaLink" id="O00327"/>
<dbReference type="SIGNOR" id="O00327"/>
<dbReference type="BioGRID-ORCS" id="406">
    <property type="hits" value="10 hits in 1167 CRISPR screens"/>
</dbReference>
<dbReference type="ChiTaRS" id="ARNTL">
    <property type="organism name" value="human"/>
</dbReference>
<dbReference type="EvolutionaryTrace" id="O00327"/>
<dbReference type="GeneWiki" id="ARNTL"/>
<dbReference type="GenomeRNAi" id="406"/>
<dbReference type="Pharos" id="O00327">
    <property type="development level" value="Tbio"/>
</dbReference>
<dbReference type="PRO" id="PR:O00327"/>
<dbReference type="Proteomes" id="UP000005640">
    <property type="component" value="Chromosome 11"/>
</dbReference>
<dbReference type="RNAct" id="O00327">
    <property type="molecule type" value="protein"/>
</dbReference>
<dbReference type="Bgee" id="ENSG00000133794">
    <property type="expression patterns" value="Expressed in left ovary and 190 other cell types or tissues"/>
</dbReference>
<dbReference type="ExpressionAtlas" id="O00327">
    <property type="expression patterns" value="baseline and differential"/>
</dbReference>
<dbReference type="GO" id="GO:0034751">
    <property type="term" value="C:aryl hydrocarbon receptor complex"/>
    <property type="evidence" value="ECO:0000318"/>
    <property type="project" value="GO_Central"/>
</dbReference>
<dbReference type="GO" id="GO:0000785">
    <property type="term" value="C:chromatin"/>
    <property type="evidence" value="ECO:0000247"/>
    <property type="project" value="NTNU_SB"/>
</dbReference>
<dbReference type="GO" id="GO:0033391">
    <property type="term" value="C:chromatoid body"/>
    <property type="evidence" value="ECO:0000250"/>
    <property type="project" value="UniProtKB"/>
</dbReference>
<dbReference type="GO" id="GO:1990513">
    <property type="term" value="C:CLOCK-BMAL transcription complex"/>
    <property type="evidence" value="ECO:0000353"/>
    <property type="project" value="ComplexPortal"/>
</dbReference>
<dbReference type="GO" id="GO:0043231">
    <property type="term" value="C:intracellular membrane-bounded organelle"/>
    <property type="evidence" value="ECO:0000314"/>
    <property type="project" value="HPA"/>
</dbReference>
<dbReference type="GO" id="GO:0005654">
    <property type="term" value="C:nucleoplasm"/>
    <property type="evidence" value="ECO:0000314"/>
    <property type="project" value="HPA"/>
</dbReference>
<dbReference type="GO" id="GO:0005634">
    <property type="term" value="C:nucleus"/>
    <property type="evidence" value="ECO:0000314"/>
    <property type="project" value="UniProtKB"/>
</dbReference>
<dbReference type="GO" id="GO:0016605">
    <property type="term" value="C:PML body"/>
    <property type="evidence" value="ECO:0007669"/>
    <property type="project" value="UniProtKB-SubCell"/>
</dbReference>
<dbReference type="GO" id="GO:0017162">
    <property type="term" value="F:aryl hydrocarbon receptor binding"/>
    <property type="evidence" value="ECO:0000353"/>
    <property type="project" value="BHF-UCL"/>
</dbReference>
<dbReference type="GO" id="GO:0003677">
    <property type="term" value="F:DNA binding"/>
    <property type="evidence" value="ECO:0000314"/>
    <property type="project" value="UniProtKB"/>
</dbReference>
<dbReference type="GO" id="GO:0000981">
    <property type="term" value="F:DNA-binding transcription factor activity, RNA polymerase II-specific"/>
    <property type="evidence" value="ECO:0000250"/>
    <property type="project" value="BHF-UCL"/>
</dbReference>
<dbReference type="GO" id="GO:0140297">
    <property type="term" value="F:DNA-binding transcription factor binding"/>
    <property type="evidence" value="ECO:0000353"/>
    <property type="project" value="GO_Central"/>
</dbReference>
<dbReference type="GO" id="GO:0070888">
    <property type="term" value="F:E-box binding"/>
    <property type="evidence" value="ECO:0000314"/>
    <property type="project" value="UniProtKB"/>
</dbReference>
<dbReference type="GO" id="GO:0051879">
    <property type="term" value="F:Hsp90 protein binding"/>
    <property type="evidence" value="ECO:0000314"/>
    <property type="project" value="BHF-UCL"/>
</dbReference>
<dbReference type="GO" id="GO:0046983">
    <property type="term" value="F:protein dimerization activity"/>
    <property type="evidence" value="ECO:0007669"/>
    <property type="project" value="InterPro"/>
</dbReference>
<dbReference type="GO" id="GO:0000978">
    <property type="term" value="F:RNA polymerase II cis-regulatory region sequence-specific DNA binding"/>
    <property type="evidence" value="ECO:0000250"/>
    <property type="project" value="UniProtKB"/>
</dbReference>
<dbReference type="GO" id="GO:0043565">
    <property type="term" value="F:sequence-specific DNA binding"/>
    <property type="evidence" value="ECO:0000250"/>
    <property type="project" value="UniProtKB"/>
</dbReference>
<dbReference type="GO" id="GO:1990837">
    <property type="term" value="F:sequence-specific double-stranded DNA binding"/>
    <property type="evidence" value="ECO:0000314"/>
    <property type="project" value="ARUK-UCL"/>
</dbReference>
<dbReference type="GO" id="GO:0000976">
    <property type="term" value="F:transcription cis-regulatory region binding"/>
    <property type="evidence" value="ECO:0000250"/>
    <property type="project" value="UniProtKB"/>
</dbReference>
<dbReference type="GO" id="GO:0003712">
    <property type="term" value="F:transcription coregulator activity"/>
    <property type="evidence" value="ECO:0000250"/>
    <property type="project" value="UniProt"/>
</dbReference>
<dbReference type="GO" id="GO:0032922">
    <property type="term" value="P:circadian regulation of gene expression"/>
    <property type="evidence" value="ECO:0000314"/>
    <property type="project" value="UniProtKB"/>
</dbReference>
<dbReference type="GO" id="GO:0007623">
    <property type="term" value="P:circadian rhythm"/>
    <property type="evidence" value="ECO:0000318"/>
    <property type="project" value="GO_Central"/>
</dbReference>
<dbReference type="GO" id="GO:0097009">
    <property type="term" value="P:energy homeostasis"/>
    <property type="evidence" value="ECO:0000250"/>
    <property type="project" value="UniProt"/>
</dbReference>
<dbReference type="GO" id="GO:0120163">
    <property type="term" value="P:negative regulation of cold-induced thermogenesis"/>
    <property type="evidence" value="ECO:0000250"/>
    <property type="project" value="YuBioLab"/>
</dbReference>
<dbReference type="GO" id="GO:0045892">
    <property type="term" value="P:negative regulation of DNA-templated transcription"/>
    <property type="evidence" value="ECO:0000250"/>
    <property type="project" value="UniProtKB"/>
</dbReference>
<dbReference type="GO" id="GO:0045599">
    <property type="term" value="P:negative regulation of fat cell differentiation"/>
    <property type="evidence" value="ECO:0000250"/>
    <property type="project" value="UniProtKB"/>
</dbReference>
<dbReference type="GO" id="GO:2000323">
    <property type="term" value="P:negative regulation of nuclear receptor-mediated glucocorticoid signaling pathway"/>
    <property type="evidence" value="ECO:0000250"/>
    <property type="project" value="UniProtKB"/>
</dbReference>
<dbReference type="GO" id="GO:0032007">
    <property type="term" value="P:negative regulation of TOR signaling"/>
    <property type="evidence" value="ECO:0000250"/>
    <property type="project" value="UniProtKB"/>
</dbReference>
<dbReference type="GO" id="GO:0090403">
    <property type="term" value="P:oxidative stress-induced premature senescence"/>
    <property type="evidence" value="ECO:0000250"/>
    <property type="project" value="UniProtKB"/>
</dbReference>
<dbReference type="GO" id="GO:0090263">
    <property type="term" value="P:positive regulation of canonical Wnt signaling pathway"/>
    <property type="evidence" value="ECO:0000250"/>
    <property type="project" value="UniProtKB"/>
</dbReference>
<dbReference type="GO" id="GO:0042753">
    <property type="term" value="P:positive regulation of circadian rhythm"/>
    <property type="evidence" value="ECO:0000314"/>
    <property type="project" value="ComplexPortal"/>
</dbReference>
<dbReference type="GO" id="GO:0045893">
    <property type="term" value="P:positive regulation of DNA-templated transcription"/>
    <property type="evidence" value="ECO:0000314"/>
    <property type="project" value="UniProtKB"/>
</dbReference>
<dbReference type="GO" id="GO:1901985">
    <property type="term" value="P:positive regulation of protein acetylation"/>
    <property type="evidence" value="ECO:0000315"/>
    <property type="project" value="UniProtKB"/>
</dbReference>
<dbReference type="GO" id="GO:2001016">
    <property type="term" value="P:positive regulation of skeletal muscle cell differentiation"/>
    <property type="evidence" value="ECO:0000250"/>
    <property type="project" value="UniProtKB"/>
</dbReference>
<dbReference type="GO" id="GO:0045944">
    <property type="term" value="P:positive regulation of transcription by RNA polymerase II"/>
    <property type="evidence" value="ECO:0000314"/>
    <property type="project" value="BHF-UCL"/>
</dbReference>
<dbReference type="GO" id="GO:0043161">
    <property type="term" value="P:proteasome-mediated ubiquitin-dependent protein catabolic process"/>
    <property type="evidence" value="ECO:0000250"/>
    <property type="project" value="UniProtKB"/>
</dbReference>
<dbReference type="GO" id="GO:0051726">
    <property type="term" value="P:regulation of cell cycle"/>
    <property type="evidence" value="ECO:0000250"/>
    <property type="project" value="UniProtKB"/>
</dbReference>
<dbReference type="GO" id="GO:2000772">
    <property type="term" value="P:regulation of cellular senescence"/>
    <property type="evidence" value="ECO:0000250"/>
    <property type="project" value="UniProtKB"/>
</dbReference>
<dbReference type="GO" id="GO:0006355">
    <property type="term" value="P:regulation of DNA-templated transcription"/>
    <property type="evidence" value="ECO:0000250"/>
    <property type="project" value="UniProtKB"/>
</dbReference>
<dbReference type="GO" id="GO:0042634">
    <property type="term" value="P:regulation of hair cycle"/>
    <property type="evidence" value="ECO:0000315"/>
    <property type="project" value="UniProtKB"/>
</dbReference>
<dbReference type="GO" id="GO:0050796">
    <property type="term" value="P:regulation of insulin secretion"/>
    <property type="evidence" value="ECO:0000250"/>
    <property type="project" value="UniProtKB"/>
</dbReference>
<dbReference type="GO" id="GO:0050767">
    <property type="term" value="P:regulation of neurogenesis"/>
    <property type="evidence" value="ECO:0000250"/>
    <property type="project" value="UniProtKB"/>
</dbReference>
<dbReference type="GO" id="GO:0006357">
    <property type="term" value="P:regulation of transcription by RNA polymerase II"/>
    <property type="evidence" value="ECO:0000318"/>
    <property type="project" value="GO_Central"/>
</dbReference>
<dbReference type="GO" id="GO:2000074">
    <property type="term" value="P:regulation of type B pancreatic cell development"/>
    <property type="evidence" value="ECO:0000250"/>
    <property type="project" value="UniProtKB"/>
</dbReference>
<dbReference type="GO" id="GO:0051775">
    <property type="term" value="P:response to redox state"/>
    <property type="evidence" value="ECO:0000314"/>
    <property type="project" value="UniProtKB"/>
</dbReference>
<dbReference type="GO" id="GO:0007283">
    <property type="term" value="P:spermatogenesis"/>
    <property type="evidence" value="ECO:0000250"/>
    <property type="project" value="UniProtKB"/>
</dbReference>
<dbReference type="CDD" id="cd11438">
    <property type="entry name" value="bHLH-PAS_ARNTL_PASD3"/>
    <property type="match status" value="1"/>
</dbReference>
<dbReference type="CDD" id="cd00130">
    <property type="entry name" value="PAS"/>
    <property type="match status" value="2"/>
</dbReference>
<dbReference type="FunFam" id="4.10.280.10:FF:000018">
    <property type="entry name" value="Aryl hydrocarbon receptor nuclear translocator-like protein 1"/>
    <property type="match status" value="1"/>
</dbReference>
<dbReference type="FunFam" id="3.30.450.20:FF:000006">
    <property type="entry name" value="aryl hydrocarbon receptor nuclear translocator-like protein 1"/>
    <property type="match status" value="1"/>
</dbReference>
<dbReference type="FunFam" id="3.30.450.20:FF:000010">
    <property type="entry name" value="Aryl hydrocarbon receptor nuclear translocator-like, isoform CRA_b"/>
    <property type="match status" value="1"/>
</dbReference>
<dbReference type="Gene3D" id="4.10.280.10">
    <property type="entry name" value="Helix-loop-helix DNA-binding domain"/>
    <property type="match status" value="1"/>
</dbReference>
<dbReference type="Gene3D" id="3.30.450.20">
    <property type="entry name" value="PAS domain"/>
    <property type="match status" value="2"/>
</dbReference>
<dbReference type="IDEAL" id="IID00426"/>
<dbReference type="InterPro" id="IPR011598">
    <property type="entry name" value="bHLH_dom"/>
</dbReference>
<dbReference type="InterPro" id="IPR050933">
    <property type="entry name" value="Circadian_TF"/>
</dbReference>
<dbReference type="InterPro" id="IPR036638">
    <property type="entry name" value="HLH_DNA-bd_sf"/>
</dbReference>
<dbReference type="InterPro" id="IPR001067">
    <property type="entry name" value="Nuc_translocat"/>
</dbReference>
<dbReference type="InterPro" id="IPR001610">
    <property type="entry name" value="PAC"/>
</dbReference>
<dbReference type="InterPro" id="IPR000014">
    <property type="entry name" value="PAS"/>
</dbReference>
<dbReference type="InterPro" id="IPR035965">
    <property type="entry name" value="PAS-like_dom_sf"/>
</dbReference>
<dbReference type="InterPro" id="IPR013767">
    <property type="entry name" value="PAS_fold"/>
</dbReference>
<dbReference type="NCBIfam" id="TIGR00229">
    <property type="entry name" value="sensory_box"/>
    <property type="match status" value="1"/>
</dbReference>
<dbReference type="PANTHER" id="PTHR23042">
    <property type="entry name" value="CIRCADIAN PROTEIN CLOCK/ARNT/BMAL/PAS"/>
    <property type="match status" value="1"/>
</dbReference>
<dbReference type="Pfam" id="PF00010">
    <property type="entry name" value="HLH"/>
    <property type="match status" value="1"/>
</dbReference>
<dbReference type="Pfam" id="PF00989">
    <property type="entry name" value="PAS"/>
    <property type="match status" value="1"/>
</dbReference>
<dbReference type="Pfam" id="PF14598">
    <property type="entry name" value="PAS_11"/>
    <property type="match status" value="1"/>
</dbReference>
<dbReference type="PRINTS" id="PR00785">
    <property type="entry name" value="NCTRNSLOCATR"/>
</dbReference>
<dbReference type="SMART" id="SM00353">
    <property type="entry name" value="HLH"/>
    <property type="match status" value="1"/>
</dbReference>
<dbReference type="SMART" id="SM00086">
    <property type="entry name" value="PAC"/>
    <property type="match status" value="1"/>
</dbReference>
<dbReference type="SMART" id="SM00091">
    <property type="entry name" value="PAS"/>
    <property type="match status" value="2"/>
</dbReference>
<dbReference type="SUPFAM" id="SSF47459">
    <property type="entry name" value="HLH, helix-loop-helix DNA-binding domain"/>
    <property type="match status" value="1"/>
</dbReference>
<dbReference type="SUPFAM" id="SSF55785">
    <property type="entry name" value="PYP-like sensor domain (PAS domain)"/>
    <property type="match status" value="2"/>
</dbReference>
<dbReference type="PROSITE" id="PS50888">
    <property type="entry name" value="BHLH"/>
    <property type="match status" value="1"/>
</dbReference>
<dbReference type="PROSITE" id="PS50112">
    <property type="entry name" value="PAS"/>
    <property type="match status" value="2"/>
</dbReference>
<comment type="function">
    <text evidence="1 5 6 9 12 13 14 19">Transcriptional activator which forms a core component of the circadian clock. The circadian clock, an internal time-keeping system, regulates various physiological processes through the generation of approximately 24 hour circadian rhythms in gene expression, which are translated into rhythms in metabolism and behavior. It is derived from the Latin roots 'circa' (about) and 'diem' (day) and acts as an important regulator of a wide array of physiological functions including metabolism, sleep, body temperature, blood pressure, endocrine, immune, cardiovascular, and renal function. Consists of two major components: the central clock, residing in the suprachiasmatic nucleus (SCN) of the brain, and the peripheral clocks that are present in nearly every tissue and organ system. Both the central and peripheral clocks can be reset by environmental cues, also known as Zeitgebers (German for 'timegivers'). The predominant Zeitgeber for the central clock is light, which is sensed by retina and signals directly to the SCN. The central clock entrains the peripheral clocks through neuronal and hormonal signals, body temperature and feeding-related cues, aligning all clocks with the external light/dark cycle. Circadian rhythms allow an organism to achieve temporal homeostasis with its environment at the molecular level by regulating gene expression to create a peak of protein expression once every 24 hours to control when a particular physiological process is most active with respect to the solar day. Transcription and translation of core clock components (CLOCK, NPAS2, BMAL1, BMAL2, PER1, PER2, PER3, CRY1 and CRY2) plays a critical role in rhythm generation, whereas delays imposed by post-translational modifications (PTMs) are important for determining the period (tau) of the rhythms (tau refers to the period of a rhythm and is the length, in time, of one complete cycle). A diurnal rhythm is synchronized with the day/night cycle, while the ultradian and infradian rhythms have a period shorter and longer than 24 hours, respectively. Disruptions in the circadian rhythms contribute to the pathology of cardiovascular diseases, cancer, metabolic syndromes and aging. A transcription/translation feedback loop (TTFL) forms the core of the molecular circadian clock mechanism. Transcription factors, CLOCK or NPAS2 and BMAL1 or BMAL2, form the positive limb of the feedback loop, act in the form of a heterodimer and activate the transcription of core clock genes and clock-controlled genes (involved in key metabolic processes), harboring E-box elements (5'-CACGTG-3') within their promoters. The core clock genes: PER1/2/3 and CRY1/2 which are transcriptional repressors form the negative limb of the feedback loop and interact with the CLOCK|NPAS2-BMAL1|BMAL2 heterodimer inhibiting its activity and thereby negatively regulating their own expression. This heterodimer also activates nuclear receptors NR1D1/2 and RORA/B/G, which form a second feedback loop and which activate and repress BMAL1 transcription, respectively. BMAL1 positively regulates myogenesis and negatively regulates adipogenesis via the transcriptional control of the genes of the canonical Wnt signaling pathway. Plays a role in normal pancreatic beta-cell function; regulates glucose-stimulated insulin secretion via the regulation of antioxidant genes NFE2L2/NRF2 and its targets SESN2, PRDX3, CCLC and CCLM. Negatively regulates the mTORC1 signaling pathway; regulates the expression of MTOR and DEPTOR. Controls diurnal oscillations of Ly6C inflammatory monocytes; rhythmic recruitment of the PRC2 complex imparts diurnal variation to chemokine expression that is necessary to sustain Ly6C monocyte rhythms. Regulates the expression of HSD3B2, STAR, PTGS2, CYP11A1, CYP19A1 and LHCGR in the ovary and also the genes involved in hair growth. Plays an important role in adult hippocampal neurogenesis by regulating the timely entry of neural stem/progenitor cells (NSPCs) into the cell cycle and the number of cell divisions that take place prior to cell-cycle exit. Regulates the circadian expression of CIART and KLF11. The CLOCK-BMAL1 heterodimer regulates the circadian expression of SERPINE1/PAI1, VWF, B3, CCRN4L/NOC, NAMPT, DBP, MYOD1, PPARGC1A, PPARGC1B, SIRT1, GYS2, F7, NGFR, GNRHR, BHLHE40/DEC1, ATF4, MTA1, KLF10 and also genes implicated in glucose and lipid metabolism. Promotes rhythmic chromatin opening, regulating the DNA accessibility of other transcription factors. The NPAS2-BMAL1 heterodimer positively regulates the expression of MAOA, F7 and LDHA and modulates the circadian rhythm of daytime contrast sensitivity by regulating the rhythmic expression of adenylate cyclase type 1 (ADCY1) in the retina. The preferred binding motif for the CLOCK-BMAL1 heterodimer is 5'-CACGTGA-3', which contains a flanking adenine nucleotide at the 3-prime end of the canonical 6-nucleotide E-box sequence (PubMed:23229515). CLOCK specifically binds to the half-site 5'-CAC-3', while BMAL1 binds to the half-site 5'-GTGA-3' (PubMed:23229515). The CLOCK-BMAL1 heterodimer also recognizes the non-canonical E-box motifs 5'-AACGTGA-3' and 5'-CATGTGA-3' (PubMed:23229515). Essential for the rhythmic interaction of CLOCK with ASS1 and plays a critical role in positively regulating CLOCK-mediated acetylation of ASS1 (PubMed:28985504). Plays a role in protecting against lethal sepsis by limiting the expression of immune checkpoint protein CD274 in macrophages in a PKM2-dependent manner (By similarity). Regulates the diurnal rhythms of skeletal muscle metabolism via transcriptional activation of genes promoting triglyceride synthesis (DGAT2) and metabolic efficiency (COQ10B) (By similarity).</text>
</comment>
<comment type="function">
    <text evidence="22">(Microbial infection) Regulates SARS coronavirus-2/SARS-CoV-2 entry and replication in lung epithelial cells probably through the post-transcriptional regulation of ACE2 and interferon-stimulated gene expression.</text>
</comment>
<comment type="activity regulation">
    <text evidence="5 11">There is conflicting data about the effect of NAD cofactors on activity. PubMed:11441146 suggests that the redox state of the cell can modulate the transcriptional activity of the CLOCK-BMAL1 heterodimer; NADH and NADPH enhance the DNA-binding activity of the heterodimer. PubMed:23229515 reports that NADH and NADPH have no significant effect on DNA-binding activity of the CLOCK-BMAL1 heterodimer.</text>
</comment>
<comment type="subunit">
    <text evidence="1 7 10 11 15 16 17 18 19 20 21 23 24">Component of the circadian clock oscillator which includes the CRY1/2 proteins, CLOCK or NPAS2,BMAL1 or BMAL2, CSNK1D and/or CSNK1E, TIMELESS and the PER1/2/3 proteins (By similarity). Forms a heterodimer with CLOCK (PubMed:23229515, PubMed:9616112). The CLOCK-BMAL1 heterodimer is required for E-box-dependent transactivation, for CLOCK nuclear translocation and degradation, and, for phosphorylation of both CLOCK and BMAL1 (By similarity). Part of a nuclear complex which also includes RACK1 and PRKCA; RACK1 and PRKCA are recruited to the complex in a circadian manner (By similarity). Interacts with NPAS2 (By similarity). Interacts with EZH2 (By similarity). Interacts with SUMO3 (By similarity). Interacts with SIRT1 (By similarity). Interacts with AHR (PubMed:9079689). Interacts with ID1, ID2 and ID3 (By similarity). Interacts with DDX4 (By similarity). Interacts with OGT (By similarity). Interacts with EED and SUZ12 (By similarity). Interacts with MTA1 (By similarity). Interacts with CIART (PubMed:24385426). Interacts with HSP90 (PubMed:9079689). Interacts with KAT2B and EP300 (PubMed:14645221). Interacts with BHLHE40/DEC1 and BHLHE41/DEC2 (By similarity). Interacts with RELB and the interaction is enhanced in the presence of CLOCK (By similarity). Interacts with PER1, PER2, CRY1 and CRY2 and this interaction requires a translocation to the nucleus (By similarity). Interaction of the CLOCK-BMAL1 heterodimer with PER or CRY inhibits transcription activation (By similarity). Interaction of the CLOCK-BMAL1 with CRY1 is independent of DNA but with PER2 is off DNA (By similarity). The CLOCK-BMAL1 heterodimer interacts with GSK3B (By similarity). Interacts with KDM5A (PubMed:21960634). Interacts with KMT2A; in a circadian manner (By similarity). Interacts with UBE3A (PubMed:24728990). Interacts with PRKCG (By similarity). Interacts with MAGEL2 (By similarity). Interacts with NCOA2 (By similarity). Interacts with THRAP3 (By similarity). The CLOCK-BMAL1 heterodimer interacts with PASD1 (PubMed:25936801). Interacts with PASD1 (PubMed:25936801). Interacts with USP9X (PubMed:29626158). Interacts with PIWIL2 (via PIWI domain) (PubMed:28903391). Interacts with HDAC3 (By similarity). Interacts with HNF4A (PubMed:30530698).</text>
</comment>
<comment type="interaction">
    <interactant intactId="EBI-1794206">
        <id>O00327</id>
    </interactant>
    <interactant intactId="EBI-1794265">
        <id>O15516</id>
        <label>CLOCK</label>
    </interactant>
    <organismsDiffer>false</organismsDiffer>
    <experiments>6</experiments>
</comment>
<comment type="interaction">
    <interactant intactId="EBI-1794206">
        <id>O00327</id>
    </interactant>
    <interactant intactId="EBI-10179332">
        <id>D0VY79</id>
        <label>HIF1A</label>
    </interactant>
    <organismsDiffer>false</organismsDiffer>
    <experiments>3</experiments>
</comment>
<comment type="interaction">
    <interactant intactId="EBI-1794206">
        <id>O00327</id>
    </interactant>
    <interactant intactId="EBI-3932727">
        <id>Q99743</id>
        <label>NPAS2</label>
    </interactant>
    <organismsDiffer>false</organismsDiffer>
    <experiments>4</experiments>
</comment>
<comment type="interaction">
    <interactant intactId="EBI-11991546">
        <id>O00327-8</id>
    </interactant>
    <interactant intactId="EBI-1054824">
        <id>O14977</id>
        <label>AZIN1</label>
    </interactant>
    <organismsDiffer>false</organismsDiffer>
    <experiments>3</experiments>
</comment>
<comment type="interaction">
    <interactant intactId="EBI-11991546">
        <id>O00327-8</id>
    </interactant>
    <interactant intactId="EBI-1794265">
        <id>O15516</id>
        <label>CLOCK</label>
    </interactant>
    <organismsDiffer>false</organismsDiffer>
    <experiments>6</experiments>
</comment>
<comment type="interaction">
    <interactant intactId="EBI-11991546">
        <id>O00327-8</id>
    </interactant>
    <interactant intactId="EBI-11022401">
        <id>Q96HY7</id>
        <label>DHTKD1</label>
    </interactant>
    <organismsDiffer>false</organismsDiffer>
    <experiments>3</experiments>
</comment>
<comment type="interaction">
    <interactant intactId="EBI-11991546">
        <id>O00327-8</id>
    </interactant>
    <interactant intactId="EBI-447470">
        <id>Q99814</id>
        <label>EPAS1</label>
    </interactant>
    <organismsDiffer>false</organismsDiffer>
    <experiments>3</experiments>
</comment>
<comment type="interaction">
    <interactant intactId="EBI-11991546">
        <id>O00327-8</id>
    </interactant>
    <interactant intactId="EBI-3932727">
        <id>Q99743</id>
        <label>NPAS2</label>
    </interactant>
    <organismsDiffer>false</organismsDiffer>
    <experiments>10</experiments>
</comment>
<comment type="interaction">
    <interactant intactId="EBI-11991546">
        <id>O00327-8</id>
    </interactant>
    <interactant intactId="EBI-2819919">
        <id>Q8WVT3</id>
        <label>TRAPPC12</label>
    </interactant>
    <organismsDiffer>false</organismsDiffer>
    <experiments>3</experiments>
</comment>
<comment type="interaction">
    <interactant intactId="EBI-11991546">
        <id>O00327-8</id>
    </interactant>
    <interactant intactId="EBI-12030590">
        <id>Q9H0C1</id>
        <label>ZMYND12</label>
    </interactant>
    <organismsDiffer>false</organismsDiffer>
    <experiments>5</experiments>
</comment>
<comment type="subcellular location">
    <subcellularLocation>
        <location evidence="3 14">Nucleus</location>
    </subcellularLocation>
    <subcellularLocation>
        <location evidence="1">Cytoplasm</location>
    </subcellularLocation>
    <subcellularLocation>
        <location evidence="1">Nucleus</location>
        <location evidence="1">PML body</location>
    </subcellularLocation>
    <text evidence="1">Shuttles between the nucleus and the cytoplasm and this nucleocytoplasmic shuttling is essential for the nuclear accumulation of CLOCK, target gene transcription and the degradation of the CLOCK-BMAL1 heterodimer. The sumoylated form localizes in the PML body. Sequestered to the cytoplasm in the presence of ID2.</text>
</comment>
<comment type="alternative products">
    <event type="alternative splicing"/>
    <isoform>
        <id>O00327-2</id>
        <name>BMAL1B</name>
        <name>JAP3</name>
        <sequence type="displayed"/>
    </isoform>
    <isoform>
        <id>O00327-1</id>
        <name>BMAL1A</name>
        <sequence type="described" ref="VSP_002094"/>
    </isoform>
    <isoform>
        <id>O00327-3</id>
        <name>BMAL1C</name>
        <sequence type="described" ref="VSP_002096 VSP_002097"/>
    </isoform>
    <isoform>
        <id>O00327-4</id>
        <name>BMAL1D</name>
        <sequence type="described" ref="VSP_002098"/>
    </isoform>
    <isoform>
        <id>O00327-5</id>
        <name>BMAL1E</name>
        <sequence type="described" ref="VSP_002099 VSP_002100"/>
    </isoform>
    <isoform>
        <id>O00327-6</id>
        <name>BMAL1F</name>
        <sequence type="described" ref="VSP_002101 VSP_002102"/>
    </isoform>
    <isoform>
        <id>O00327-7</id>
        <name>MOP3</name>
        <sequence type="described" ref="VSP_002095"/>
    </isoform>
    <isoform>
        <id>O00327-8</id>
        <name>8</name>
        <sequence type="described" ref="VSP_035457"/>
    </isoform>
    <isoform>
        <id>O00327-9</id>
        <name>9</name>
        <sequence type="described" ref="VSP_002094 VSP_035457"/>
    </isoform>
    <text>Additional isoforms seem to exist.</text>
</comment>
<comment type="tissue specificity">
    <text evidence="14">Hair follicles (at protein level). Highly expressed in the adult brain, skeletal muscle and heart.</text>
</comment>
<comment type="PTM">
    <text evidence="16 20">Ubiquitinated, leading to its proteasomal degradation (PubMed:24728990). Deubiquitinated by USP9X (PubMed:29626158).</text>
</comment>
<comment type="PTM">
    <text evidence="1">O-glycosylated; contains O-GlcNAc. O-glycosylation by OGT prevents protein degradation by inhibiting ubiquitination. It also stabilizes the CLOCK-BMAL1 heterodimer thereby increasing CLOCK-BMAL1-mediated transcription of genes in the negative loop of the circadian clock such as PER1/2/3 and CRY1/2.</text>
</comment>
<comment type="PTM">
    <text evidence="1">Acetylated on Lys-538 by CLOCK during the repression phase of the circadian cycle. Acetylation facilitates recruitment of CRY1 protein and initiates the repression phase of the circadian cycle. Acetylated at Lys-538 by KAT5 during the activation phase of the cycle, leading to recruitment of the positive transcription elongation factor b (P-TEFb) and BRD4, followed by productive elongation of circadian transcripts. Deacetylated by SIRT1, which may result in decreased protein stability.</text>
</comment>
<comment type="PTM">
    <text evidence="1 11">Phosphorylated upon dimerization with CLOCK. Phosphorylation enhances the transcriptional activity, alters the subcellular localization and decreases the stability of the CLOCK-BMAL1 heterodimer by promoting its degradation. Phosphorylation shows circadian variations in the liver with a peak between CT10 to CT14. Phosphorylation at Ser-90 by CK2 is essential for its nuclear localization, its interaction with CLOCK and controls CLOCK nuclear entry (By similarity). Dephosphorylation at Ser-78 is important for dimerization with CLOCK and transcriptional activity (PubMed:23229515).</text>
</comment>
<comment type="PTM">
    <text evidence="1">Sumoylated on Lys-259 upon dimerization with CLOCK. Predominantly conjugated to poly-SUMO2/3 rather than SUMO1 and the level of these conjugates undergo rhythmic variation, peaking at CT9-CT12. Sumoylation localizes it exclusively to the PML body and promotes its ubiquitination in the PML body, ubiquitin-dependent proteasomal degradation and the transcriptional activity of the CLOCK-BMAL1 heterodimer.</text>
</comment>
<comment type="PTM">
    <text evidence="1">Undergoes lysosome-mediated degradation in a time-dependent manner in the liver.</text>
</comment>
<comment type="miscellaneous">
    <text>CLOCK-BMAL1 double mutations within the PAS domains result in synergistic desensitization to high levels of CRY on repression of CLOCK-BMAL1 transcriptional activity of PER1 and, disrupt circadian rhythmicity.</text>
</comment>
<accession>O00327</accession>
<accession>A2I2N6</accession>
<accession>A8K645</accession>
<accession>B5ME11</accession>
<accession>B7WPG7</accession>
<accession>D3DQW6</accession>
<accession>O00313</accession>
<accession>O00314</accession>
<accession>O00315</accession>
<accession>O00316</accession>
<accession>O00317</accession>
<accession>Q4G136</accession>
<accession>Q8IUT4</accession>
<accession>Q99631</accession>
<accession>Q99649</accession>
<feature type="chain" id="PRO_0000127156" description="Basic helix-loop-helix ARNT-like protein 1">
    <location>
        <begin position="1"/>
        <end position="626"/>
    </location>
</feature>
<feature type="domain" description="bHLH" evidence="3">
    <location>
        <begin position="72"/>
        <end position="125"/>
    </location>
</feature>
<feature type="domain" description="PAS 1" evidence="2">
    <location>
        <begin position="143"/>
        <end position="215"/>
    </location>
</feature>
<feature type="domain" description="PAS 2" evidence="2">
    <location>
        <begin position="326"/>
        <end position="396"/>
    </location>
</feature>
<feature type="domain" description="PAC">
    <location>
        <begin position="401"/>
        <end position="444"/>
    </location>
</feature>
<feature type="region of interest" description="Disordered" evidence="4">
    <location>
        <begin position="1"/>
        <end position="60"/>
    </location>
</feature>
<feature type="region of interest" description="Disordered" evidence="4">
    <location>
        <begin position="458"/>
        <end position="493"/>
    </location>
</feature>
<feature type="region of interest" description="Interaction with CIART" evidence="1">
    <location>
        <begin position="508"/>
        <end position="588"/>
    </location>
</feature>
<feature type="region of interest" description="Disordered" evidence="4">
    <location>
        <begin position="511"/>
        <end position="595"/>
    </location>
</feature>
<feature type="short sequence motif" description="Nuclear localization signal" evidence="1">
    <location>
        <begin position="36"/>
        <end position="41"/>
    </location>
</feature>
<feature type="short sequence motif" description="Nuclear export signal 1" evidence="1">
    <location>
        <begin position="142"/>
        <end position="152"/>
    </location>
</feature>
<feature type="short sequence motif" description="Nuclear export signal 2" evidence="1">
    <location>
        <begin position="361"/>
        <end position="369"/>
    </location>
</feature>
<feature type="compositionally biased region" description="Low complexity" evidence="4">
    <location>
        <begin position="17"/>
        <end position="32"/>
    </location>
</feature>
<feature type="compositionally biased region" description="Basic and acidic residues" evidence="4">
    <location>
        <begin position="51"/>
        <end position="60"/>
    </location>
</feature>
<feature type="compositionally biased region" description="Gly residues" evidence="4">
    <location>
        <begin position="484"/>
        <end position="493"/>
    </location>
</feature>
<feature type="compositionally biased region" description="Low complexity" evidence="4">
    <location>
        <begin position="511"/>
        <end position="521"/>
    </location>
</feature>
<feature type="site" description="Interaction with E-box DNA" evidence="11">
    <location>
        <position position="77"/>
    </location>
</feature>
<feature type="site" description="Interaction with E-box DNA" evidence="11">
    <location>
        <position position="80"/>
    </location>
</feature>
<feature type="site" description="Interaction with E-box DNA" evidence="11">
    <location>
        <position position="81"/>
    </location>
</feature>
<feature type="site" description="Interaction with E-box DNA" evidence="11">
    <location>
        <position position="85"/>
    </location>
</feature>
<feature type="site" description="Important for interaction with CLOCK" evidence="11">
    <location>
        <position position="125"/>
    </location>
</feature>
<feature type="modified residue" description="Phosphoserine; by GSK3-beta" evidence="1">
    <location>
        <position position="17"/>
    </location>
</feature>
<feature type="modified residue" description="Phosphothreonine; by GSK3-beta" evidence="1">
    <location>
        <position position="21"/>
    </location>
</feature>
<feature type="modified residue" description="Phosphoserine" evidence="30">
    <location>
        <position position="78"/>
    </location>
</feature>
<feature type="modified residue" description="Phosphoserine; by CK2" evidence="1">
    <location>
        <position position="90"/>
    </location>
</feature>
<feature type="modified residue" description="N6-acetyllysine" evidence="1">
    <location>
        <position position="538"/>
    </location>
</feature>
<feature type="cross-link" description="Glycyl lysine isopeptide (Lys-Gly) (interchain with G-Cter in SUMO2 and SUMO3)" evidence="1">
    <location>
        <position position="252"/>
    </location>
</feature>
<feature type="cross-link" description="Glycyl lysine isopeptide (Lys-Gly) (interchain with G-Cter in SUMO2)" evidence="32">
    <location>
        <position position="259"/>
    </location>
</feature>
<feature type="splice variant" id="VSP_002095" description="In isoform MOP3." evidence="27">
    <original>MADQRMDISSTISDFMSPGPTDLLSSSLGTSGVDCNRKRKGSSTDYQESMDTDKDDPHG</original>
    <variation>MSKEAVSLWALTVSLQPPVPLCVCREMTGSGRRKQQCVTLPFISRELCFYLLLFPPP</variation>
    <location>
        <begin position="1"/>
        <end position="59"/>
    </location>
</feature>
<feature type="splice variant" id="VSP_002094" description="In isoform BMAL1A and isoform 9." evidence="25 26">
    <original>MADQRMDISSTISDFMSPGPTDLLSSSLGTSGVDCNRKRKGSSTDYQ</original>
    <variation>MINI</variation>
    <location>
        <begin position="1"/>
        <end position="47"/>
    </location>
</feature>
<feature type="splice variant" id="VSP_002096" description="In isoform BMAL1C." evidence="29">
    <original>T</original>
    <variation>R</variation>
    <location>
        <position position="224"/>
    </location>
</feature>
<feature type="splice variant" id="VSP_002097" description="In isoform BMAL1C." evidence="29">
    <location>
        <begin position="225"/>
        <end position="626"/>
    </location>
</feature>
<feature type="splice variant" id="VSP_002098" description="In isoform BMAL1D." evidence="29">
    <location>
        <begin position="274"/>
        <end position="391"/>
    </location>
</feature>
<feature type="splice variant" id="VSP_035457" description="In isoform 8 and isoform 9." evidence="25 26">
    <location>
        <position position="274"/>
    </location>
</feature>
<feature type="splice variant" id="VSP_002099" description="In isoform BMAL1E." evidence="29">
    <original>SFCTIHSTGYLKSWPPTKMGLDED</original>
    <variation>AFCTIHSTGYFGIFTTRTSRHIVL</variation>
    <location>
        <begin position="278"/>
        <end position="301"/>
    </location>
</feature>
<feature type="splice variant" id="VSP_002100" description="In isoform BMAL1E." evidence="29">
    <location>
        <begin position="302"/>
        <end position="626"/>
    </location>
</feature>
<feature type="splice variant" id="VSP_002101" description="In isoform BMAL1F." evidence="29">
    <original>ANVLEGGDPTFPQLTASPHSMDSMLPSGEGGPKRTHPTVPGIPGGTRAGAGKIGRMIAEEIMEIHRIRGSSPSSCGSSPLNITS</original>
    <variation>SRVDTGHLGQVERCTVLSRPNSRFLIAGMFTEPTSWKAGTQPSHSSQHPPTAWTACCPLEKVAQRGPTPLFQGFQGEPGLGQEK</variation>
    <location>
        <begin position="443"/>
        <end position="526"/>
    </location>
</feature>
<feature type="splice variant" id="VSP_002102" description="In isoform BMAL1F." evidence="29">
    <location>
        <begin position="527"/>
        <end position="626"/>
    </location>
</feature>
<feature type="mutagenesis site" description="Enhanced PER1 reporter activity by CLOCK-BMAL1." evidence="8">
    <original>S</original>
    <variation>A</variation>
    <variation>E</variation>
    <location>
        <position position="9"/>
    </location>
</feature>
<feature type="mutagenesis site" description="2-2.5-fold increase in CLOCK-BMAL1 transcriptional activity in the absence of CRY1. No change in repression activity in the presence of CRY1." evidence="8">
    <original>S</original>
    <variation>F</variation>
    <location>
        <position position="9"/>
    </location>
</feature>
<feature type="mutagenesis site" description="Enhanced PER1 reporter activity by CLOCK-BMAL1." evidence="8">
    <original>S</original>
    <variation>A</variation>
    <variation>E</variation>
    <location>
        <position position="10"/>
    </location>
</feature>
<feature type="mutagenesis site" description="2-2.5-fold increase in CLOCK-BMAL1 transcriptional activity in the absence of CRY1. No change in repression activity in the presence of CRY1." evidence="8">
    <original>S</original>
    <variation>L</variation>
    <location>
        <position position="10"/>
    </location>
</feature>
<feature type="mutagenesis site" description="Phosphomimetic mutant which severely impairs DNA binding and CLOCK-BMAL1 transcriptional activity." evidence="11">
    <original>S</original>
    <variation>E</variation>
    <location>
        <position position="78"/>
    </location>
</feature>
<feature type="mutagenesis site" description="No effect on CLOCK binding." evidence="11">
    <original>M</original>
    <variation>F</variation>
    <location>
        <position position="88"/>
    </location>
</feature>
<feature type="mutagenesis site" description="Phosphomimetic mutant with no effect on DNA binding or CLOCK-BMAL1 transcriptional activity." evidence="11">
    <original>S</original>
    <variation>E</variation>
    <location>
        <position position="90"/>
    </location>
</feature>
<feature type="mutagenesis site" description="Impaired CLOCK binding." evidence="11">
    <original>L</original>
    <variation>H</variation>
    <location>
        <position position="125"/>
    </location>
</feature>
<feature type="mutagenesis site" description="Increased desensitization to CRY1, in the presence of CLOCK. Approximately 2-fold increase in CLOCK-BMAL1 transcriptional activity in the absence of CRY1; when associated with E-407." evidence="8">
    <original>A</original>
    <variation>S</variation>
    <variation>T</variation>
    <location>
        <position position="611"/>
    </location>
</feature>
<feature type="mutagenesis site" description="Increased desensitization to CRY1, in the presence of CLOCK. Approximately 2-fold increase in CLOCK-BMAL1 transcriptional activity in the absence of CRY1." evidence="8">
    <original>G</original>
    <variation>E</variation>
    <location>
        <position position="612"/>
    </location>
</feature>
<feature type="sequence conflict" description="In Ref. 2; AAC51213." evidence="29" ref="2">
    <original>R</original>
    <variation>G</variation>
    <location>
        <position position="69"/>
    </location>
</feature>
<feature type="sequence conflict" description="In Ref. 1; BAA19935." evidence="29" ref="1">
    <original>K</original>
    <variation>R</variation>
    <location>
        <position position="123"/>
    </location>
</feature>
<feature type="sequence conflict" description="In Ref. 1; BAA19939." evidence="29" ref="1">
    <original>S</original>
    <variation>P</variation>
    <location>
        <position position="173"/>
    </location>
</feature>
<feature type="sequence conflict" description="In Ref. 1; BAA19938." evidence="29" ref="1">
    <original>K</original>
    <variation>N</variation>
    <location>
        <position position="259"/>
    </location>
</feature>
<feature type="sequence conflict" description="In Ref. 1; BAA19938." evidence="29" ref="1">
    <original>D</original>
    <variation>N</variation>
    <location>
        <position position="264"/>
    </location>
</feature>
<feature type="sequence conflict" description="In Ref. 1; BAA19937." evidence="29" ref="1">
    <original>S</original>
    <variation>N</variation>
    <location>
        <position position="418"/>
    </location>
</feature>
<feature type="sequence conflict" description="In Ref. 2; AAC51213." evidence="29" ref="2">
    <original>SP</original>
    <variation>LR</variation>
    <location>
        <begin position="513"/>
        <end position="514"/>
    </location>
</feature>
<feature type="helix" evidence="33">
    <location>
        <begin position="71"/>
        <end position="98"/>
    </location>
</feature>
<feature type="helix" evidence="33">
    <location>
        <begin position="100"/>
        <end position="103"/>
    </location>
</feature>
<feature type="helix" evidence="33">
    <location>
        <begin position="111"/>
        <end position="125"/>
    </location>
</feature>
<protein>
    <recommendedName>
        <fullName evidence="31">Basic helix-loop-helix ARNT-like protein 1</fullName>
    </recommendedName>
    <alternativeName>
        <fullName>Aryl hydrocarbon receptor nuclear translocator-like protein 1</fullName>
    </alternativeName>
    <alternativeName>
        <fullName>Basic-helix-loop-helix-PAS protein MOP3</fullName>
    </alternativeName>
    <alternativeName>
        <fullName>Brain and muscle ARNT-like 1</fullName>
    </alternativeName>
    <alternativeName>
        <fullName>Class E basic helix-loop-helix protein 5</fullName>
        <shortName>bHLHe5</shortName>
    </alternativeName>
    <alternativeName>
        <fullName>Member of PAS protein 3</fullName>
    </alternativeName>
    <alternativeName>
        <fullName>PAS domain-containing protein 3</fullName>
    </alternativeName>
    <alternativeName>
        <fullName>bHLH-PAS protein JAP3</fullName>
    </alternativeName>
</protein>
<proteinExistence type="evidence at protein level"/>
<sequence>MADQRMDISSTISDFMSPGPTDLLSSSLGTSGVDCNRKRKGSSTDYQESMDTDKDDPHGRLEYTEHQGRIKNAREAHSQIEKRRRDKMNSFIDELASLVPTCNAMSRKLDKLTVLRMAVQHMKTLRGATNPYTEANYKPTFLSDDELKHLILRAADGFLFVVGCDRGKILFVSESVFKILNYSQNDLIGQSLFDYLHPKDIAKVKEQLSSSDTAPRERLIDAKTGLPVKTDITPGPSRLCSGARRSFFCRMKCNRPSVKVEDKDFPSTCSKKKADRKSFCTIHSTGYLKSWPPTKMGLDEDNEPDNEGCNLSCLVAIGRLHSHVVPQPVNGEIRVKSMEYVSRHAIDGKFVFVDQRATAILAYLPQELLGTSCYEYFHQDDIGHLAECHRQVLQTREKITTNCYKFKIKDGSFITLRSRWFSFMNPWTKEVEYIVSTNTVVLANVLEGGDPTFPQLTASPHSMDSMLPSGEGGPKRTHPTVPGIPGGTRAGAGKIGRMIAEEIMEIHRIRGSSPSSCGSSPLNITSTPPPDASSPGGKKILNGGTPDIPSSGLLSGQAQENPGYPYSDSSSILGENPHIGIDMIDNDQGSSSPSNDEAAMAVIMSLLEADAGLGGPVDFSDLPWPL</sequence>
<organism>
    <name type="scientific">Homo sapiens</name>
    <name type="common">Human</name>
    <dbReference type="NCBI Taxonomy" id="9606"/>
    <lineage>
        <taxon>Eukaryota</taxon>
        <taxon>Metazoa</taxon>
        <taxon>Chordata</taxon>
        <taxon>Craniata</taxon>
        <taxon>Vertebrata</taxon>
        <taxon>Euteleostomi</taxon>
        <taxon>Mammalia</taxon>
        <taxon>Eutheria</taxon>
        <taxon>Euarchontoglires</taxon>
        <taxon>Primates</taxon>
        <taxon>Haplorrhini</taxon>
        <taxon>Catarrhini</taxon>
        <taxon>Hominidae</taxon>
        <taxon>Homo</taxon>
    </lineage>
</organism>
<reference key="1">
    <citation type="journal article" date="1997" name="Biochem. Biophys. Res. Commun.">
        <title>cDNA cloning and tissue-specific expression of a novel basic helix-loop-helix/PAS protein (BMAL1) and identification of alternatively spliced variants with alternative translation initiation site usage.</title>
        <authorList>
            <person name="Ikeda M."/>
            <person name="Nomura M."/>
        </authorList>
    </citation>
    <scope>NUCLEOTIDE SEQUENCE [GENOMIC DNA / MRNA]</scope>
    <scope>ALTERNATIVE SPLICING (ISOFORMS BMAL1A; BMAL1B; BMAL1C; BMAL1D; BMAL1E AND BMAL1F)</scope>
    <source>
        <tissue>Brain</tissue>
    </source>
</reference>
<reference key="2">
    <citation type="journal article" date="1997" name="J. Biol. Chem.">
        <title>Characterization of a subset of the basic-helix-loop-helix-PAS superfamily that interacts with components of the dioxin signaling pathway.</title>
        <authorList>
            <person name="Hogenesch J.B."/>
            <person name="Chan W.K."/>
            <person name="Jackiw V.H."/>
            <person name="Brown R.C."/>
            <person name="Gu Y.-Z."/>
            <person name="Pray-Grant M."/>
            <person name="Perdew G.H."/>
            <person name="Bradfield C.A."/>
        </authorList>
    </citation>
    <scope>NUCLEOTIDE SEQUENCE [MRNA] (ISOFORM MOP3)</scope>
    <scope>INTERACTION WITH HSP90 AND AHR</scope>
    <source>
        <tissue>Fetal brain</tissue>
    </source>
</reference>
<reference key="3">
    <citation type="submission" date="1996-12" db="EMBL/GenBank/DDBJ databases">
        <title>JAP3: a novel ARNT-like bHLH-PAS protein.</title>
        <authorList>
            <person name="Tian H."/>
            <person name="Russell D.W."/>
            <person name="McKnight S.L."/>
        </authorList>
    </citation>
    <scope>NUCLEOTIDE SEQUENCE [MRNA] (ISOFORM BMAL1B)</scope>
</reference>
<reference key="4">
    <citation type="journal article" date="1998" name="Proc. Natl. Acad. Sci. U.S.A.">
        <title>The basic-helix-loop-helix-PAS orphan MOP3 forms transcriptionally active complexes with circadian and hypoxia factors.</title>
        <authorList>
            <person name="Hogenesch J.B."/>
            <person name="Gu Y.Z."/>
            <person name="Jain S."/>
            <person name="Bradfield C.A."/>
        </authorList>
    </citation>
    <scope>NUCLEOTIDE SEQUENCE [MRNA] (ISOFORM BMAL1B)</scope>
</reference>
<reference key="5">
    <citation type="journal article" date="2004" name="Nat. Genet.">
        <title>Complete sequencing and characterization of 21,243 full-length human cDNAs.</title>
        <authorList>
            <person name="Ota T."/>
            <person name="Suzuki Y."/>
            <person name="Nishikawa T."/>
            <person name="Otsuki T."/>
            <person name="Sugiyama T."/>
            <person name="Irie R."/>
            <person name="Wakamatsu A."/>
            <person name="Hayashi K."/>
            <person name="Sato H."/>
            <person name="Nagai K."/>
            <person name="Kimura K."/>
            <person name="Makita H."/>
            <person name="Sekine M."/>
            <person name="Obayashi M."/>
            <person name="Nishi T."/>
            <person name="Shibahara T."/>
            <person name="Tanaka T."/>
            <person name="Ishii S."/>
            <person name="Yamamoto J."/>
            <person name="Saito K."/>
            <person name="Kawai Y."/>
            <person name="Isono Y."/>
            <person name="Nakamura Y."/>
            <person name="Nagahari K."/>
            <person name="Murakami K."/>
            <person name="Yasuda T."/>
            <person name="Iwayanagi T."/>
            <person name="Wagatsuma M."/>
            <person name="Shiratori A."/>
            <person name="Sudo H."/>
            <person name="Hosoiri T."/>
            <person name="Kaku Y."/>
            <person name="Kodaira H."/>
            <person name="Kondo H."/>
            <person name="Sugawara M."/>
            <person name="Takahashi M."/>
            <person name="Kanda K."/>
            <person name="Yokoi T."/>
            <person name="Furuya T."/>
            <person name="Kikkawa E."/>
            <person name="Omura Y."/>
            <person name="Abe K."/>
            <person name="Kamihara K."/>
            <person name="Katsuta N."/>
            <person name="Sato K."/>
            <person name="Tanikawa M."/>
            <person name="Yamazaki M."/>
            <person name="Ninomiya K."/>
            <person name="Ishibashi T."/>
            <person name="Yamashita H."/>
            <person name="Murakawa K."/>
            <person name="Fujimori K."/>
            <person name="Tanai H."/>
            <person name="Kimata M."/>
            <person name="Watanabe M."/>
            <person name="Hiraoka S."/>
            <person name="Chiba Y."/>
            <person name="Ishida S."/>
            <person name="Ono Y."/>
            <person name="Takiguchi S."/>
            <person name="Watanabe S."/>
            <person name="Yosida M."/>
            <person name="Hotuta T."/>
            <person name="Kusano J."/>
            <person name="Kanehori K."/>
            <person name="Takahashi-Fujii A."/>
            <person name="Hara H."/>
            <person name="Tanase T.-O."/>
            <person name="Nomura Y."/>
            <person name="Togiya S."/>
            <person name="Komai F."/>
            <person name="Hara R."/>
            <person name="Takeuchi K."/>
            <person name="Arita M."/>
            <person name="Imose N."/>
            <person name="Musashino K."/>
            <person name="Yuuki H."/>
            <person name="Oshima A."/>
            <person name="Sasaki N."/>
            <person name="Aotsuka S."/>
            <person name="Yoshikawa Y."/>
            <person name="Matsunawa H."/>
            <person name="Ichihara T."/>
            <person name="Shiohata N."/>
            <person name="Sano S."/>
            <person name="Moriya S."/>
            <person name="Momiyama H."/>
            <person name="Satoh N."/>
            <person name="Takami S."/>
            <person name="Terashima Y."/>
            <person name="Suzuki O."/>
            <person name="Nakagawa S."/>
            <person name="Senoh A."/>
            <person name="Mizoguchi H."/>
            <person name="Goto Y."/>
            <person name="Shimizu F."/>
            <person name="Wakebe H."/>
            <person name="Hishigaki H."/>
            <person name="Watanabe T."/>
            <person name="Sugiyama A."/>
            <person name="Takemoto M."/>
            <person name="Kawakami B."/>
            <person name="Yamazaki M."/>
            <person name="Watanabe K."/>
            <person name="Kumagai A."/>
            <person name="Itakura S."/>
            <person name="Fukuzumi Y."/>
            <person name="Fujimori Y."/>
            <person name="Komiyama M."/>
            <person name="Tashiro H."/>
            <person name="Tanigami A."/>
            <person name="Fujiwara T."/>
            <person name="Ono T."/>
            <person name="Yamada K."/>
            <person name="Fujii Y."/>
            <person name="Ozaki K."/>
            <person name="Hirao M."/>
            <person name="Ohmori Y."/>
            <person name="Kawabata A."/>
            <person name="Hikiji T."/>
            <person name="Kobatake N."/>
            <person name="Inagaki H."/>
            <person name="Ikema Y."/>
            <person name="Okamoto S."/>
            <person name="Okitani R."/>
            <person name="Kawakami T."/>
            <person name="Noguchi S."/>
            <person name="Itoh T."/>
            <person name="Shigeta K."/>
            <person name="Senba T."/>
            <person name="Matsumura K."/>
            <person name="Nakajima Y."/>
            <person name="Mizuno T."/>
            <person name="Morinaga M."/>
            <person name="Sasaki M."/>
            <person name="Togashi T."/>
            <person name="Oyama M."/>
            <person name="Hata H."/>
            <person name="Watanabe M."/>
            <person name="Komatsu T."/>
            <person name="Mizushima-Sugano J."/>
            <person name="Satoh T."/>
            <person name="Shirai Y."/>
            <person name="Takahashi Y."/>
            <person name="Nakagawa K."/>
            <person name="Okumura K."/>
            <person name="Nagase T."/>
            <person name="Nomura N."/>
            <person name="Kikuchi H."/>
            <person name="Masuho Y."/>
            <person name="Yamashita R."/>
            <person name="Nakai K."/>
            <person name="Yada T."/>
            <person name="Nakamura Y."/>
            <person name="Ohara O."/>
            <person name="Isogai T."/>
            <person name="Sugano S."/>
        </authorList>
    </citation>
    <scope>NUCLEOTIDE SEQUENCE [LARGE SCALE MRNA] (ISOFORMS BMAL1B AND 9)</scope>
    <source>
        <tissue>Brain</tissue>
    </source>
</reference>
<reference key="6">
    <citation type="submission" date="2006-09" db="EMBL/GenBank/DDBJ databases">
        <title>ARNTL resequence.</title>
        <authorList>
            <person name="Kripke D.F."/>
            <person name="Klimecki W."/>
        </authorList>
    </citation>
    <scope>NUCLEOTIDE SEQUENCE [GENOMIC DNA]</scope>
</reference>
<reference key="7">
    <citation type="journal article" date="2006" name="Nature">
        <title>Human chromosome 11 DNA sequence and analysis including novel gene identification.</title>
        <authorList>
            <person name="Taylor T.D."/>
            <person name="Noguchi H."/>
            <person name="Totoki Y."/>
            <person name="Toyoda A."/>
            <person name="Kuroki Y."/>
            <person name="Dewar K."/>
            <person name="Lloyd C."/>
            <person name="Itoh T."/>
            <person name="Takeda T."/>
            <person name="Kim D.-W."/>
            <person name="She X."/>
            <person name="Barlow K.F."/>
            <person name="Bloom T."/>
            <person name="Bruford E."/>
            <person name="Chang J.L."/>
            <person name="Cuomo C.A."/>
            <person name="Eichler E."/>
            <person name="FitzGerald M.G."/>
            <person name="Jaffe D.B."/>
            <person name="LaButti K."/>
            <person name="Nicol R."/>
            <person name="Park H.-S."/>
            <person name="Seaman C."/>
            <person name="Sougnez C."/>
            <person name="Yang X."/>
            <person name="Zimmer A.R."/>
            <person name="Zody M.C."/>
            <person name="Birren B.W."/>
            <person name="Nusbaum C."/>
            <person name="Fujiyama A."/>
            <person name="Hattori M."/>
            <person name="Rogers J."/>
            <person name="Lander E.S."/>
            <person name="Sakaki Y."/>
        </authorList>
    </citation>
    <scope>NUCLEOTIDE SEQUENCE [LARGE SCALE GENOMIC DNA]</scope>
</reference>
<reference key="8">
    <citation type="submission" date="2005-09" db="EMBL/GenBank/DDBJ databases">
        <authorList>
            <person name="Mural R.J."/>
            <person name="Istrail S."/>
            <person name="Sutton G.G."/>
            <person name="Florea L."/>
            <person name="Halpern A.L."/>
            <person name="Mobarry C.M."/>
            <person name="Lippert R."/>
            <person name="Walenz B."/>
            <person name="Shatkay H."/>
            <person name="Dew I."/>
            <person name="Miller J.R."/>
            <person name="Flanigan M.J."/>
            <person name="Edwards N.J."/>
            <person name="Bolanos R."/>
            <person name="Fasulo D."/>
            <person name="Halldorsson B.V."/>
            <person name="Hannenhalli S."/>
            <person name="Turner R."/>
            <person name="Yooseph S."/>
            <person name="Lu F."/>
            <person name="Nusskern D.R."/>
            <person name="Shue B.C."/>
            <person name="Zheng X.H."/>
            <person name="Zhong F."/>
            <person name="Delcher A.L."/>
            <person name="Huson D.H."/>
            <person name="Kravitz S.A."/>
            <person name="Mouchard L."/>
            <person name="Reinert K."/>
            <person name="Remington K.A."/>
            <person name="Clark A.G."/>
            <person name="Waterman M.S."/>
            <person name="Eichler E.E."/>
            <person name="Adams M.D."/>
            <person name="Hunkapiller M.W."/>
            <person name="Myers E.W."/>
            <person name="Venter J.C."/>
        </authorList>
    </citation>
    <scope>NUCLEOTIDE SEQUENCE [LARGE SCALE GENOMIC DNA]</scope>
</reference>
<reference key="9">
    <citation type="journal article" date="2004" name="Genome Res.">
        <title>The status, quality, and expansion of the NIH full-length cDNA project: the Mammalian Gene Collection (MGC).</title>
        <authorList>
            <consortium name="The MGC Project Team"/>
        </authorList>
    </citation>
    <scope>NUCLEOTIDE SEQUENCE [LARGE SCALE MRNA] (ISOFORMS 8 AND BMAL1A)</scope>
    <source>
        <tissue>Brain</tissue>
        <tissue>Skin</tissue>
    </source>
</reference>
<reference key="10">
    <citation type="journal article" date="1998" name="Science">
        <title>Role of the CLOCK protein in the mammalian circadian mechanism.</title>
        <authorList>
            <person name="Gekakis N."/>
            <person name="Staknis D."/>
            <person name="Nguyen H.B."/>
            <person name="Davis F.C."/>
            <person name="Wilsbacher L.D."/>
            <person name="King D.P."/>
            <person name="Takahashi J.S."/>
            <person name="Weitz C.J."/>
        </authorList>
    </citation>
    <scope>INTERACTION WITH CLOCK</scope>
</reference>
<reference key="11">
    <citation type="journal article" date="2001" name="Science">
        <title>Regulation of clock and NPAS2 DNA binding by the redox state of NAD cofactors.</title>
        <authorList>
            <person name="Rutter J."/>
            <person name="Reick M."/>
            <person name="Wu L.C."/>
            <person name="McKnight S.L."/>
        </authorList>
    </citation>
    <scope>FUNCTION</scope>
    <scope>DNA-BINDING</scope>
    <scope>ACTIVITY REGULATION</scope>
</reference>
<reference key="12">
    <citation type="journal article" date="2003" name="J. Mol. Cell. Cardiol.">
        <title>Regulation of the PAI-1 promoter by circadian clock components: differential activation by BMAL1 and BMAL2.</title>
        <authorList>
            <person name="Schoenhard J.A."/>
            <person name="Smith L.H."/>
            <person name="Painter C.A."/>
            <person name="Eren M."/>
            <person name="Johnson C.H."/>
            <person name="Vaughan D.E."/>
        </authorList>
    </citation>
    <scope>FUNCTION</scope>
</reference>
<reference key="13">
    <citation type="journal article" date="2004" name="J. Biol. Chem.">
        <title>Histone acetyltransferase-dependent chromatin remodeling and the vascular clock.</title>
        <authorList>
            <person name="Curtis A.M."/>
            <person name="Seo S.B."/>
            <person name="Westgate E.J."/>
            <person name="Rudic R.D."/>
            <person name="Smyth E.M."/>
            <person name="Chakravarti D."/>
            <person name="FitzGerald G.A."/>
            <person name="McNamara P."/>
        </authorList>
    </citation>
    <scope>INTERACTION WITH KAT2B AND EP300</scope>
</reference>
<reference key="14">
    <citation type="journal article" date="2006" name="Nat. Genet.">
        <title>Feedback repression is required for mammalian circadian clock function.</title>
        <authorList>
            <person name="Sato T.K."/>
            <person name="Yamada R.G."/>
            <person name="Ukai H."/>
            <person name="Baggs J.E."/>
            <person name="Miraglia L.J."/>
            <person name="Kobayashi T.J."/>
            <person name="Welsh D.K."/>
            <person name="Kay S.A."/>
            <person name="Ueda H.R."/>
            <person name="Hogenesch J.B."/>
        </authorList>
    </citation>
    <scope>MUTAGENESIS OF SER-9; SER-10; ALA-611 AND GLY-612</scope>
</reference>
<reference key="15">
    <citation type="journal article" date="2008" name="Mol. Cell. Biochem.">
        <title>CLOCK/BMAL1 regulates human nocturnin transcription through binding to the E-box of nocturnin promoter.</title>
        <authorList>
            <person name="Li R."/>
            <person name="Yue J."/>
            <person name="Zhang Y."/>
            <person name="Zhou L."/>
            <person name="Hao W."/>
            <person name="Yuan J."/>
            <person name="Qiang B."/>
            <person name="Ding J.M."/>
            <person name="Peng X."/>
            <person name="Cao J.M."/>
        </authorList>
    </citation>
    <scope>FUNCTION</scope>
</reference>
<reference key="16">
    <citation type="journal article" date="2011" name="Science">
        <title>Histone lysine demethylase JARID1a activates CLOCK-BMAL1 and influences the circadian clock.</title>
        <authorList>
            <person name="DiTacchio L."/>
            <person name="Le H.D."/>
            <person name="Vollmers C."/>
            <person name="Hatori M."/>
            <person name="Witcher M."/>
            <person name="Secombe J."/>
            <person name="Panda S."/>
        </authorList>
    </citation>
    <scope>INTERACTION WITH KDM5A</scope>
</reference>
<reference key="17">
    <citation type="journal article" date="2013" name="Am. J. Physiol.">
        <title>Mechanism of the circadian clock in physiology.</title>
        <authorList>
            <person name="Richards J."/>
            <person name="Gumz M.L."/>
        </authorList>
    </citation>
    <scope>REVIEW</scope>
</reference>
<reference key="18">
    <citation type="journal article" date="2013" name="Arch. Dermatol. Res.">
        <title>The clock gene brain and muscle Arnt-like protein-1 (BMAL1) is involved in hair growth.</title>
        <authorList>
            <person name="Watabe Y."/>
            <person name="Tomioka M."/>
            <person name="Watabe A."/>
            <person name="Aihara M."/>
            <person name="Shimba S."/>
            <person name="Inoue H."/>
        </authorList>
    </citation>
    <scope>FUNCTION</scope>
</reference>
<reference key="19">
    <citation type="journal article" date="2013" name="J. Neurosci.">
        <title>p75 neurotrophin receptor is a clock gene that regulates oscillatory components of circadian and metabolic networks.</title>
        <authorList>
            <person name="Baeza-Raja B."/>
            <person name="Eckel-Mahan K."/>
            <person name="Zhang L."/>
            <person name="Vagena E."/>
            <person name="Tsigelny I.F."/>
            <person name="Sassone-Corsi P."/>
            <person name="Ptacek L.J."/>
            <person name="Akassoglou K."/>
        </authorList>
    </citation>
    <scope>FUNCTION</scope>
</reference>
<reference key="20">
    <citation type="journal article" date="2013" name="Physiol. Rev.">
        <title>Metabolism and the circadian clock converge.</title>
        <authorList>
            <person name="Eckel-Mahan K."/>
            <person name="Sassone-Corsi P."/>
        </authorList>
    </citation>
    <scope>REVIEW</scope>
</reference>
<reference key="21">
    <citation type="journal article" date="2014" name="J. Biol. Chem.">
        <title>Gene model 129 (Gm129) encodes a novel transcriptional repressor that modulates circadian gene expression.</title>
        <authorList>
            <person name="Annayev Y."/>
            <person name="Adar S."/>
            <person name="Chiou Y.Y."/>
            <person name="Lieb J."/>
            <person name="Sancar A."/>
            <person name="Ye R."/>
        </authorList>
    </citation>
    <scope>INTERACTION WITH CIART</scope>
</reference>
<reference key="22">
    <citation type="journal article" date="2014" name="J. Invest. Dermatol.">
        <title>A meeting of two chronobiological systems: circadian proteins Period1 and BMAL1 modulate the human hair cycle clock.</title>
        <authorList>
            <person name="Al-Nuaimi Y."/>
            <person name="Hardman J.A."/>
            <person name="Biro T."/>
            <person name="Haslam I.S."/>
            <person name="Philpott M.P."/>
            <person name="Toth B.I."/>
            <person name="Farjo N."/>
            <person name="Farjo B."/>
            <person name="Baier G."/>
            <person name="Watson R.E."/>
            <person name="Grimaldi B."/>
            <person name="Kloepper J.E."/>
            <person name="Paus R."/>
        </authorList>
    </citation>
    <scope>FUNCTION IN HAIR GROWTH</scope>
    <scope>SUBCELLULAR LOCATION</scope>
    <scope>TISSUE SPECIFICITY</scope>
</reference>
<reference key="23">
    <citation type="journal article" date="2014" name="Nucleic Acids Res.">
        <title>The E3 ubiquitin ligase UBE3A is an integral component of the molecular circadian clock through regulating the BMAL1 transcription factor.</title>
        <authorList>
            <person name="Gossan N.C."/>
            <person name="Zhang F."/>
            <person name="Guo B."/>
            <person name="Jin D."/>
            <person name="Yoshitane H."/>
            <person name="Yao A."/>
            <person name="Glossop N."/>
            <person name="Zhang Y.Q."/>
            <person name="Fukada Y."/>
            <person name="Meng Q.J."/>
        </authorList>
    </citation>
    <scope>INTERACTION WITH UBE3A</scope>
    <scope>UBIQUITINATION</scope>
    <scope>PROTEASOMAL DEGRADATION</scope>
</reference>
<reference key="24">
    <citation type="journal article" date="2014" name="Trends Cell Biol.">
        <title>Molecular architecture of the mammalian circadian clock.</title>
        <authorList>
            <person name="Partch C.L."/>
            <person name="Green C.B."/>
            <person name="Takahashi J.S."/>
        </authorList>
    </citation>
    <scope>REVIEW</scope>
</reference>
<reference key="25">
    <citation type="journal article" date="2015" name="Mol. Cell">
        <title>Cancer/testis antigen PASD1 silences the circadian clock.</title>
        <authorList>
            <person name="Michael A.K."/>
            <person name="Harvey S.L."/>
            <person name="Sammons P.J."/>
            <person name="Anderson A.P."/>
            <person name="Kopalle H.M."/>
            <person name="Banham A.H."/>
            <person name="Partch C.L."/>
        </authorList>
    </citation>
    <scope>INTERACTION WITH PASD1</scope>
</reference>
<reference key="26">
    <citation type="journal article" date="2017" name="Mol. Cell">
        <title>CLOCK acetylates ASS1 to drive circadian rhythm of ureagenesis.</title>
        <authorList>
            <person name="Lin R."/>
            <person name="Mo Y."/>
            <person name="Zha H."/>
            <person name="Qu Z."/>
            <person name="Xie P."/>
            <person name="Zhu Z.J."/>
            <person name="Xu Y."/>
            <person name="Xiong Y."/>
            <person name="Guan K.L."/>
        </authorList>
    </citation>
    <scope>FUNCTION</scope>
    <scope>INTERACTION WITH CLOCK</scope>
</reference>
<reference key="27">
    <citation type="journal article" date="2017" name="Nat. Struct. Mol. Biol.">
        <title>Site-specific mapping of the human SUMO proteome reveals co-modification with phosphorylation.</title>
        <authorList>
            <person name="Hendriks I.A."/>
            <person name="Lyon D."/>
            <person name="Young C."/>
            <person name="Jensen L.J."/>
            <person name="Vertegaal A.C."/>
            <person name="Nielsen M.L."/>
        </authorList>
    </citation>
    <scope>SUMOYLATION [LARGE SCALE ANALYSIS] AT LYS-259</scope>
    <scope>IDENTIFICATION BY MASS SPECTROMETRY [LARGE SCALE ANALYSIS]</scope>
</reference>
<reference key="28">
    <citation type="journal article" date="2017" name="Oncotarget">
        <title>Cancer/testis antigen PIWIL2 suppresses circadian rhythms by regulating the stability and activity of BMAL1 and CLOCK.</title>
        <authorList>
            <person name="Lu Y."/>
            <person name="Zheng X."/>
            <person name="Hu W."/>
            <person name="Bian S."/>
            <person name="Zhang Z."/>
            <person name="Tao D."/>
            <person name="Liu Y."/>
            <person name="Ma Y."/>
        </authorList>
    </citation>
    <scope>INTERACTION WITH PIWIL2</scope>
</reference>
<reference key="29">
    <citation type="journal article" date="2018" name="Biochem. J.">
        <title>Deubiquitinating enzyme USP9X regulates cellular clock function by modulating the ubiquitination and degradation of a core circadian protein BMAL1.</title>
        <authorList>
            <person name="Zhang Y."/>
            <person name="Duan C."/>
            <person name="Yang J."/>
            <person name="Chen S."/>
            <person name="Liu Q."/>
            <person name="Zhou L."/>
            <person name="Huang Z."/>
            <person name="Xu Y."/>
            <person name="Xu G."/>
        </authorList>
    </citation>
    <scope>DEUBIQUITINATION BY USP9X</scope>
    <scope>INTERACTION WITH USP9X</scope>
</reference>
<reference key="30">
    <citation type="journal article" date="2018" name="Proc. Natl. Acad. Sci. U.S.A.">
        <title>Nuclear receptor HNF4A transrepresses CLOCK:BMAL1 and modulates tissue-specific circadian networks.</title>
        <authorList>
            <person name="Qu M."/>
            <person name="Duffy T."/>
            <person name="Hirota T."/>
            <person name="Kay S.A."/>
        </authorList>
    </citation>
    <scope>INTERACTION WITH HNF4A</scope>
</reference>
<reference key="31">
    <citation type="journal article" date="2021" name="IScience">
        <title>The circadian clock component BMAL1 regulates SARS-CoV-2 entry and replication in lung epithelial cells.</title>
        <authorList>
            <person name="Zhuang X."/>
            <person name="Tsukuda S."/>
            <person name="Wrensch F."/>
            <person name="Wing P.A.C."/>
            <person name="Schilling M."/>
            <person name="Harris J.M."/>
            <person name="Borrmann H."/>
            <person name="Morgan S.B."/>
            <person name="Cane J.L."/>
            <person name="Mailly L."/>
            <person name="Thakur N."/>
            <person name="Conceicao C."/>
            <person name="Sanghani H."/>
            <person name="Heydmann L."/>
            <person name="Bach C."/>
            <person name="Ashton A."/>
            <person name="Walsh S."/>
            <person name="Tan T.K."/>
            <person name="Schimanski L."/>
            <person name="Huang K.A."/>
            <person name="Schuster C."/>
            <person name="Watashi K."/>
            <person name="Hinks T.S.C."/>
            <person name="Jagannath A."/>
            <person name="Vausdevan S.R."/>
            <person name="Bailey D."/>
            <person name="Baumert T.F."/>
            <person name="McKeating J.A."/>
        </authorList>
    </citation>
    <scope>FUNCTION (MICROBIAL INFECTION)</scope>
</reference>
<reference key="32">
    <citation type="journal article" date="2013" name="Cell Res.">
        <title>Intermolecular recognition revealed by the complex structure of human CLOCK-BMAL1 basic helix-loop-helix domains with E-box DNA.</title>
        <authorList>
            <person name="Wang Z."/>
            <person name="Wu Y."/>
            <person name="Li L."/>
            <person name="Su X.D."/>
        </authorList>
    </citation>
    <scope>X-RAY CRYSTALLOGRAPHY (2.40 ANGSTROMS) OF 66-128 IN COMPLEX WITH CLOCK AND DNA</scope>
    <scope>FUNCTION</scope>
    <scope>ACTIVITY REGULATION</scope>
    <scope>SUBUNIT</scope>
    <scope>PHOSPHORYLATION AT SER-78</scope>
    <scope>MUTAGENESIS OF SER-78; MET-88; SER-90 AND LEU-125</scope>
</reference>